<reference key="1">
    <citation type="journal article" date="1995" name="J. Bacteriol.">
        <title>Adjacent and divergently oriented operons under the control of the sporulation regulatory protein GerE in Bacillus subtilis.</title>
        <authorList>
            <person name="Roels S."/>
            <person name="Losick R."/>
        </authorList>
    </citation>
    <scope>NUCLEOTIDE SEQUENCE [GENOMIC DNA]</scope>
    <source>
        <strain>168</strain>
    </source>
</reference>
<reference key="2">
    <citation type="journal article" date="1998" name="DNA Res.">
        <title>Sequence analysis of the Bacillus subtilis 168 chromosome region between the sspC and odhA loci (184 degrees-180 degrees).</title>
        <authorList>
            <person name="Ghim S.-Y."/>
            <person name="Choi S.-K."/>
            <person name="Shin B.-S."/>
            <person name="Jeong Y.-M."/>
            <person name="Sorokin A."/>
            <person name="Ehrlich S.D."/>
            <person name="Park S.-H."/>
        </authorList>
    </citation>
    <scope>NUCLEOTIDE SEQUENCE [GENOMIC DNA]</scope>
    <source>
        <strain>168</strain>
    </source>
</reference>
<reference key="3">
    <citation type="journal article" date="1997" name="Nature">
        <title>The complete genome sequence of the Gram-positive bacterium Bacillus subtilis.</title>
        <authorList>
            <person name="Kunst F."/>
            <person name="Ogasawara N."/>
            <person name="Moszer I."/>
            <person name="Albertini A.M."/>
            <person name="Alloni G."/>
            <person name="Azevedo V."/>
            <person name="Bertero M.G."/>
            <person name="Bessieres P."/>
            <person name="Bolotin A."/>
            <person name="Borchert S."/>
            <person name="Borriss R."/>
            <person name="Boursier L."/>
            <person name="Brans A."/>
            <person name="Braun M."/>
            <person name="Brignell S.C."/>
            <person name="Bron S."/>
            <person name="Brouillet S."/>
            <person name="Bruschi C.V."/>
            <person name="Caldwell B."/>
            <person name="Capuano V."/>
            <person name="Carter N.M."/>
            <person name="Choi S.-K."/>
            <person name="Codani J.-J."/>
            <person name="Connerton I.F."/>
            <person name="Cummings N.J."/>
            <person name="Daniel R.A."/>
            <person name="Denizot F."/>
            <person name="Devine K.M."/>
            <person name="Duesterhoeft A."/>
            <person name="Ehrlich S.D."/>
            <person name="Emmerson P.T."/>
            <person name="Entian K.-D."/>
            <person name="Errington J."/>
            <person name="Fabret C."/>
            <person name="Ferrari E."/>
            <person name="Foulger D."/>
            <person name="Fritz C."/>
            <person name="Fujita M."/>
            <person name="Fujita Y."/>
            <person name="Fuma S."/>
            <person name="Galizzi A."/>
            <person name="Galleron N."/>
            <person name="Ghim S.-Y."/>
            <person name="Glaser P."/>
            <person name="Goffeau A."/>
            <person name="Golightly E.J."/>
            <person name="Grandi G."/>
            <person name="Guiseppi G."/>
            <person name="Guy B.J."/>
            <person name="Haga K."/>
            <person name="Haiech J."/>
            <person name="Harwood C.R."/>
            <person name="Henaut A."/>
            <person name="Hilbert H."/>
            <person name="Holsappel S."/>
            <person name="Hosono S."/>
            <person name="Hullo M.-F."/>
            <person name="Itaya M."/>
            <person name="Jones L.-M."/>
            <person name="Joris B."/>
            <person name="Karamata D."/>
            <person name="Kasahara Y."/>
            <person name="Klaerr-Blanchard M."/>
            <person name="Klein C."/>
            <person name="Kobayashi Y."/>
            <person name="Koetter P."/>
            <person name="Koningstein G."/>
            <person name="Krogh S."/>
            <person name="Kumano M."/>
            <person name="Kurita K."/>
            <person name="Lapidus A."/>
            <person name="Lardinois S."/>
            <person name="Lauber J."/>
            <person name="Lazarevic V."/>
            <person name="Lee S.-M."/>
            <person name="Levine A."/>
            <person name="Liu H."/>
            <person name="Masuda S."/>
            <person name="Mauel C."/>
            <person name="Medigue C."/>
            <person name="Medina N."/>
            <person name="Mellado R.P."/>
            <person name="Mizuno M."/>
            <person name="Moestl D."/>
            <person name="Nakai S."/>
            <person name="Noback M."/>
            <person name="Noone D."/>
            <person name="O'Reilly M."/>
            <person name="Ogawa K."/>
            <person name="Ogiwara A."/>
            <person name="Oudega B."/>
            <person name="Park S.-H."/>
            <person name="Parro V."/>
            <person name="Pohl T.M."/>
            <person name="Portetelle D."/>
            <person name="Porwollik S."/>
            <person name="Prescott A.M."/>
            <person name="Presecan E."/>
            <person name="Pujic P."/>
            <person name="Purnelle B."/>
            <person name="Rapoport G."/>
            <person name="Rey M."/>
            <person name="Reynolds S."/>
            <person name="Rieger M."/>
            <person name="Rivolta C."/>
            <person name="Rocha E."/>
            <person name="Roche B."/>
            <person name="Rose M."/>
            <person name="Sadaie Y."/>
            <person name="Sato T."/>
            <person name="Scanlan E."/>
            <person name="Schleich S."/>
            <person name="Schroeter R."/>
            <person name="Scoffone F."/>
            <person name="Sekiguchi J."/>
            <person name="Sekowska A."/>
            <person name="Seror S.J."/>
            <person name="Serror P."/>
            <person name="Shin B.-S."/>
            <person name="Soldo B."/>
            <person name="Sorokin A."/>
            <person name="Tacconi E."/>
            <person name="Takagi T."/>
            <person name="Takahashi H."/>
            <person name="Takemaru K."/>
            <person name="Takeuchi M."/>
            <person name="Tamakoshi A."/>
            <person name="Tanaka T."/>
            <person name="Terpstra P."/>
            <person name="Tognoni A."/>
            <person name="Tosato V."/>
            <person name="Uchiyama S."/>
            <person name="Vandenbol M."/>
            <person name="Vannier F."/>
            <person name="Vassarotti A."/>
            <person name="Viari A."/>
            <person name="Wambutt R."/>
            <person name="Wedler E."/>
            <person name="Wedler H."/>
            <person name="Weitzenegger T."/>
            <person name="Winters P."/>
            <person name="Wipat A."/>
            <person name="Yamamoto H."/>
            <person name="Yamane K."/>
            <person name="Yasumoto K."/>
            <person name="Yata K."/>
            <person name="Yoshida K."/>
            <person name="Yoshikawa H.-F."/>
            <person name="Zumstein E."/>
            <person name="Yoshikawa H."/>
            <person name="Danchin A."/>
        </authorList>
    </citation>
    <scope>NUCLEOTIDE SEQUENCE [LARGE SCALE GENOMIC DNA]</scope>
    <source>
        <strain>168</strain>
    </source>
</reference>
<name>CGED_BACSU</name>
<gene>
    <name type="primary">cgeD</name>
    <name type="synonym">cgeBB</name>
    <name type="ordered locus">BSU19760</name>
</gene>
<dbReference type="EMBL" id="U18421">
    <property type="protein sequence ID" value="AAA87718.1"/>
    <property type="molecule type" value="Genomic_DNA"/>
</dbReference>
<dbReference type="EMBL" id="AF015775">
    <property type="protein sequence ID" value="AAB72076.1"/>
    <property type="molecule type" value="Genomic_DNA"/>
</dbReference>
<dbReference type="EMBL" id="AF006665">
    <property type="protein sequence ID" value="AAB81152.1"/>
    <property type="molecule type" value="Genomic_DNA"/>
</dbReference>
<dbReference type="EMBL" id="AL009126">
    <property type="protein sequence ID" value="CAB13867.1"/>
    <property type="molecule type" value="Genomic_DNA"/>
</dbReference>
<dbReference type="PIR" id="C69598">
    <property type="entry name" value="C69598"/>
</dbReference>
<dbReference type="RefSeq" id="NP_389857.1">
    <property type="nucleotide sequence ID" value="NC_000964.3"/>
</dbReference>
<dbReference type="RefSeq" id="WP_003230828.1">
    <property type="nucleotide sequence ID" value="NZ_OZ025638.1"/>
</dbReference>
<dbReference type="SMR" id="P42092"/>
<dbReference type="FunCoup" id="P42092">
    <property type="interactions" value="31"/>
</dbReference>
<dbReference type="STRING" id="224308.BSU19760"/>
<dbReference type="CAZy" id="GT2">
    <property type="family name" value="Glycosyltransferase Family 2"/>
</dbReference>
<dbReference type="PaxDb" id="224308-BSU19760"/>
<dbReference type="EnsemblBacteria" id="CAB13867">
    <property type="protein sequence ID" value="CAB13867"/>
    <property type="gene ID" value="BSU_19760"/>
</dbReference>
<dbReference type="GeneID" id="940063"/>
<dbReference type="KEGG" id="bsu:BSU19760"/>
<dbReference type="PATRIC" id="fig|224308.179.peg.2165"/>
<dbReference type="eggNOG" id="COG0463">
    <property type="taxonomic scope" value="Bacteria"/>
</dbReference>
<dbReference type="InParanoid" id="P42092"/>
<dbReference type="OrthoDB" id="2850014at2"/>
<dbReference type="PhylomeDB" id="P42092"/>
<dbReference type="BioCyc" id="BSUB:BSU19760-MONOMER"/>
<dbReference type="Proteomes" id="UP000001570">
    <property type="component" value="Chromosome"/>
</dbReference>
<dbReference type="CDD" id="cd00761">
    <property type="entry name" value="Glyco_tranf_GTA_type"/>
    <property type="match status" value="1"/>
</dbReference>
<dbReference type="Gene3D" id="3.90.550.10">
    <property type="entry name" value="Spore Coat Polysaccharide Biosynthesis Protein SpsA, Chain A"/>
    <property type="match status" value="1"/>
</dbReference>
<dbReference type="InterPro" id="IPR001173">
    <property type="entry name" value="Glyco_trans_2-like"/>
</dbReference>
<dbReference type="InterPro" id="IPR050834">
    <property type="entry name" value="Glycosyltransf_2"/>
</dbReference>
<dbReference type="InterPro" id="IPR029044">
    <property type="entry name" value="Nucleotide-diphossugar_trans"/>
</dbReference>
<dbReference type="PANTHER" id="PTHR43685">
    <property type="entry name" value="GLYCOSYLTRANSFERASE"/>
    <property type="match status" value="1"/>
</dbReference>
<dbReference type="PANTHER" id="PTHR43685:SF2">
    <property type="entry name" value="GLYCOSYLTRANSFERASE 2-LIKE DOMAIN-CONTAINING PROTEIN"/>
    <property type="match status" value="1"/>
</dbReference>
<dbReference type="Pfam" id="PF00535">
    <property type="entry name" value="Glycos_transf_2"/>
    <property type="match status" value="1"/>
</dbReference>
<dbReference type="SUPFAM" id="SSF53448">
    <property type="entry name" value="Nucleotide-diphospho-sugar transferases"/>
    <property type="match status" value="1"/>
</dbReference>
<protein>
    <recommendedName>
        <fullName>Protein CgeD</fullName>
    </recommendedName>
</protein>
<feature type="chain" id="PRO_0000089598" description="Protein CgeD">
    <location>
        <begin position="1"/>
        <end position="426"/>
    </location>
</feature>
<organism>
    <name type="scientific">Bacillus subtilis (strain 168)</name>
    <dbReference type="NCBI Taxonomy" id="224308"/>
    <lineage>
        <taxon>Bacteria</taxon>
        <taxon>Bacillati</taxon>
        <taxon>Bacillota</taxon>
        <taxon>Bacilli</taxon>
        <taxon>Bacillales</taxon>
        <taxon>Bacillaceae</taxon>
        <taxon>Bacillus</taxon>
    </lineage>
</organism>
<keyword id="KW-1185">Reference proteome</keyword>
<proteinExistence type="predicted"/>
<evidence type="ECO:0000305" key="1"/>
<sequence>MGEKVSIILTSYNKPDYLQKAIESVIQQTHDLWELFIMDDHSNAETTAVIHKYLHDRRIQYHNSFVHPADRLKTARYATLINSALPFADGDYISYLTDDTVYHPERLSRMVQEFSHKPEAQAVYSKQKVVHVNERGEEISHFYRNANAVLDQAAFQVDHCSVMHRRSLLNLIHHKFGGYWDDDMKHWNHGDAIFWARLNNFTPFLPINEVLDTTYKTPDSFQNAYRFLPADLIDGSFVKGSDQNVYFFDQGVRHPVGEKWGFLYLNRTVAVPDPYLFQYRIGKILNIPNYILVKEADHPAIFYIEAGKKRRIVDQYAFQFYQFQRKDIVTIGKEEMETLPEGPPITWKRSELIKNPPGRRLFFIEREPFLFLNGVFHPISEQVTRKFFLHQKPISASFRNIQQFPIGKPFYPVYDEIIKKLNIATE</sequence>
<comment type="function">
    <text>May be involved in maturation of the outermost layer of the spore.</text>
</comment>
<comment type="similarity">
    <text evidence="1">To B.subtilis spore coat polysaccharide biosynthesis protein SpsA.</text>
</comment>
<accession>P42092</accession>